<organism>
    <name type="scientific">Xanthobacter autotrophicus (strain ATCC BAA-1158 / Py2)</name>
    <dbReference type="NCBI Taxonomy" id="78245"/>
    <lineage>
        <taxon>Bacteria</taxon>
        <taxon>Pseudomonadati</taxon>
        <taxon>Pseudomonadota</taxon>
        <taxon>Alphaproteobacteria</taxon>
        <taxon>Hyphomicrobiales</taxon>
        <taxon>Xanthobacteraceae</taxon>
        <taxon>Xanthobacter</taxon>
    </lineage>
</organism>
<name>SYP_XANP2</name>
<sequence>MRLSRYFLPILREVPKEAEIVSHRLMLRAGMIRQESAGIYAWLPFGLRVLNKVCNIIREEQNRSGAIEMLMPTIQSADLWRESGRYDDYGKEMLRIKDRHEREMLFGPTNEEMITEIVRAYVKSYKALPLNLYHIQWKFRDEVRPRFGVYRSREFLMKDAYSFDLDAAGARHSYNKMFVAYLRTFARMGLKAIPMVADTGPIGGNLSHEFIILASTGESEVFCHGDYLEMAPPSADVNFDDAAGLQSVFDRWTELYAATSEKHDEAAFAAIPEASRMAARGIEVGHIFYFGTKYSEPFGAKVLGADGAEHTIHMGSYGIGPSRLVAAMIEASHDDNGIIWPDAVAPFQVGILNLKAGDSTTGAACEKLYAELTAAGYDVLYDDTEERAGAKFATADLIGLPWQILVGPKGLADGKVELKRRVDGSRELIAPGDILERLKA</sequence>
<protein>
    <recommendedName>
        <fullName evidence="1">Proline--tRNA ligase</fullName>
        <ecNumber evidence="1">6.1.1.15</ecNumber>
    </recommendedName>
    <alternativeName>
        <fullName evidence="1">Prolyl-tRNA synthetase</fullName>
        <shortName evidence="1">ProRS</shortName>
    </alternativeName>
</protein>
<keyword id="KW-0030">Aminoacyl-tRNA synthetase</keyword>
<keyword id="KW-0067">ATP-binding</keyword>
<keyword id="KW-0963">Cytoplasm</keyword>
<keyword id="KW-0436">Ligase</keyword>
<keyword id="KW-0547">Nucleotide-binding</keyword>
<keyword id="KW-0648">Protein biosynthesis</keyword>
<keyword id="KW-1185">Reference proteome</keyword>
<proteinExistence type="inferred from homology"/>
<dbReference type="EC" id="6.1.1.15" evidence="1"/>
<dbReference type="EMBL" id="CP000781">
    <property type="protein sequence ID" value="ABS69684.1"/>
    <property type="molecule type" value="Genomic_DNA"/>
</dbReference>
<dbReference type="SMR" id="A7INT8"/>
<dbReference type="STRING" id="78245.Xaut_4463"/>
<dbReference type="KEGG" id="xau:Xaut_4463"/>
<dbReference type="eggNOG" id="COG0442">
    <property type="taxonomic scope" value="Bacteria"/>
</dbReference>
<dbReference type="HOGENOM" id="CLU_016739_4_2_5"/>
<dbReference type="OrthoDB" id="9809052at2"/>
<dbReference type="PhylomeDB" id="A7INT8"/>
<dbReference type="Proteomes" id="UP000002417">
    <property type="component" value="Chromosome"/>
</dbReference>
<dbReference type="GO" id="GO:0005829">
    <property type="term" value="C:cytosol"/>
    <property type="evidence" value="ECO:0007669"/>
    <property type="project" value="TreeGrafter"/>
</dbReference>
<dbReference type="GO" id="GO:0005524">
    <property type="term" value="F:ATP binding"/>
    <property type="evidence" value="ECO:0007669"/>
    <property type="project" value="UniProtKB-UniRule"/>
</dbReference>
<dbReference type="GO" id="GO:0004827">
    <property type="term" value="F:proline-tRNA ligase activity"/>
    <property type="evidence" value="ECO:0007669"/>
    <property type="project" value="UniProtKB-UniRule"/>
</dbReference>
<dbReference type="GO" id="GO:0006433">
    <property type="term" value="P:prolyl-tRNA aminoacylation"/>
    <property type="evidence" value="ECO:0007669"/>
    <property type="project" value="UniProtKB-UniRule"/>
</dbReference>
<dbReference type="CDD" id="cd00861">
    <property type="entry name" value="ProRS_anticodon_short"/>
    <property type="match status" value="1"/>
</dbReference>
<dbReference type="CDD" id="cd00779">
    <property type="entry name" value="ProRS_core_prok"/>
    <property type="match status" value="1"/>
</dbReference>
<dbReference type="FunFam" id="3.30.930.10:FF:000042">
    <property type="entry name" value="probable proline--tRNA ligase, mitochondrial"/>
    <property type="match status" value="1"/>
</dbReference>
<dbReference type="FunFam" id="3.40.50.800:FF:000032">
    <property type="entry name" value="Proline--tRNA ligase"/>
    <property type="match status" value="1"/>
</dbReference>
<dbReference type="Gene3D" id="3.40.50.800">
    <property type="entry name" value="Anticodon-binding domain"/>
    <property type="match status" value="1"/>
</dbReference>
<dbReference type="Gene3D" id="3.30.930.10">
    <property type="entry name" value="Bira Bifunctional Protein, Domain 2"/>
    <property type="match status" value="1"/>
</dbReference>
<dbReference type="HAMAP" id="MF_01570">
    <property type="entry name" value="Pro_tRNA_synth_type2"/>
    <property type="match status" value="1"/>
</dbReference>
<dbReference type="InterPro" id="IPR002314">
    <property type="entry name" value="aa-tRNA-synt_IIb"/>
</dbReference>
<dbReference type="InterPro" id="IPR006195">
    <property type="entry name" value="aa-tRNA-synth_II"/>
</dbReference>
<dbReference type="InterPro" id="IPR045864">
    <property type="entry name" value="aa-tRNA-synth_II/BPL/LPL"/>
</dbReference>
<dbReference type="InterPro" id="IPR004154">
    <property type="entry name" value="Anticodon-bd"/>
</dbReference>
<dbReference type="InterPro" id="IPR036621">
    <property type="entry name" value="Anticodon-bd_dom_sf"/>
</dbReference>
<dbReference type="InterPro" id="IPR002316">
    <property type="entry name" value="Pro-tRNA-ligase_IIa"/>
</dbReference>
<dbReference type="InterPro" id="IPR004500">
    <property type="entry name" value="Pro-tRNA-synth_IIa_bac-type"/>
</dbReference>
<dbReference type="InterPro" id="IPR050062">
    <property type="entry name" value="Pro-tRNA_synthetase"/>
</dbReference>
<dbReference type="InterPro" id="IPR023716">
    <property type="entry name" value="Prolyl-tRNA_ligase_IIa_type2"/>
</dbReference>
<dbReference type="InterPro" id="IPR044140">
    <property type="entry name" value="ProRS_anticodon_short"/>
</dbReference>
<dbReference type="InterPro" id="IPR033730">
    <property type="entry name" value="ProRS_core_prok"/>
</dbReference>
<dbReference type="NCBIfam" id="NF008979">
    <property type="entry name" value="PRK12325.1"/>
    <property type="match status" value="1"/>
</dbReference>
<dbReference type="NCBIfam" id="TIGR00409">
    <property type="entry name" value="proS_fam_II"/>
    <property type="match status" value="1"/>
</dbReference>
<dbReference type="PANTHER" id="PTHR42753">
    <property type="entry name" value="MITOCHONDRIAL RIBOSOME PROTEIN L39/PROLYL-TRNA LIGASE FAMILY MEMBER"/>
    <property type="match status" value="1"/>
</dbReference>
<dbReference type="PANTHER" id="PTHR42753:SF2">
    <property type="entry name" value="PROLINE--TRNA LIGASE"/>
    <property type="match status" value="1"/>
</dbReference>
<dbReference type="Pfam" id="PF03129">
    <property type="entry name" value="HGTP_anticodon"/>
    <property type="match status" value="1"/>
</dbReference>
<dbReference type="Pfam" id="PF00587">
    <property type="entry name" value="tRNA-synt_2b"/>
    <property type="match status" value="1"/>
</dbReference>
<dbReference type="PRINTS" id="PR01046">
    <property type="entry name" value="TRNASYNTHPRO"/>
</dbReference>
<dbReference type="SUPFAM" id="SSF52954">
    <property type="entry name" value="Class II aaRS ABD-related"/>
    <property type="match status" value="1"/>
</dbReference>
<dbReference type="SUPFAM" id="SSF55681">
    <property type="entry name" value="Class II aaRS and biotin synthetases"/>
    <property type="match status" value="1"/>
</dbReference>
<dbReference type="PROSITE" id="PS50862">
    <property type="entry name" value="AA_TRNA_LIGASE_II"/>
    <property type="match status" value="1"/>
</dbReference>
<accession>A7INT8</accession>
<reference key="1">
    <citation type="submission" date="2007-07" db="EMBL/GenBank/DDBJ databases">
        <title>Complete sequence of chromosome of Xanthobacter autotrophicus Py2.</title>
        <authorList>
            <consortium name="US DOE Joint Genome Institute"/>
            <person name="Copeland A."/>
            <person name="Lucas S."/>
            <person name="Lapidus A."/>
            <person name="Barry K."/>
            <person name="Glavina del Rio T."/>
            <person name="Hammon N."/>
            <person name="Israni S."/>
            <person name="Dalin E."/>
            <person name="Tice H."/>
            <person name="Pitluck S."/>
            <person name="Sims D."/>
            <person name="Brettin T."/>
            <person name="Bruce D."/>
            <person name="Detter J.C."/>
            <person name="Han C."/>
            <person name="Tapia R."/>
            <person name="Brainard J."/>
            <person name="Schmutz J."/>
            <person name="Larimer F."/>
            <person name="Land M."/>
            <person name="Hauser L."/>
            <person name="Kyrpides N."/>
            <person name="Kim E."/>
            <person name="Ensigns S.A."/>
            <person name="Richardson P."/>
        </authorList>
    </citation>
    <scope>NUCLEOTIDE SEQUENCE [LARGE SCALE GENOMIC DNA]</scope>
    <source>
        <strain>ATCC BAA-1158 / Py2</strain>
    </source>
</reference>
<evidence type="ECO:0000255" key="1">
    <source>
        <dbReference type="HAMAP-Rule" id="MF_01570"/>
    </source>
</evidence>
<feature type="chain" id="PRO_1000199459" description="Proline--tRNA ligase">
    <location>
        <begin position="1"/>
        <end position="440"/>
    </location>
</feature>
<gene>
    <name evidence="1" type="primary">proS</name>
    <name type="ordered locus">Xaut_4463</name>
</gene>
<comment type="function">
    <text evidence="1">Catalyzes the attachment of proline to tRNA(Pro) in a two-step reaction: proline is first activated by ATP to form Pro-AMP and then transferred to the acceptor end of tRNA(Pro).</text>
</comment>
<comment type="catalytic activity">
    <reaction evidence="1">
        <text>tRNA(Pro) + L-proline + ATP = L-prolyl-tRNA(Pro) + AMP + diphosphate</text>
        <dbReference type="Rhea" id="RHEA:14305"/>
        <dbReference type="Rhea" id="RHEA-COMP:9700"/>
        <dbReference type="Rhea" id="RHEA-COMP:9702"/>
        <dbReference type="ChEBI" id="CHEBI:30616"/>
        <dbReference type="ChEBI" id="CHEBI:33019"/>
        <dbReference type="ChEBI" id="CHEBI:60039"/>
        <dbReference type="ChEBI" id="CHEBI:78442"/>
        <dbReference type="ChEBI" id="CHEBI:78532"/>
        <dbReference type="ChEBI" id="CHEBI:456215"/>
        <dbReference type="EC" id="6.1.1.15"/>
    </reaction>
</comment>
<comment type="subunit">
    <text evidence="1">Homodimer.</text>
</comment>
<comment type="subcellular location">
    <subcellularLocation>
        <location evidence="1">Cytoplasm</location>
    </subcellularLocation>
</comment>
<comment type="similarity">
    <text evidence="1">Belongs to the class-II aminoacyl-tRNA synthetase family. ProS type 2 subfamily.</text>
</comment>